<reference key="1">
    <citation type="submission" date="2006-12" db="EMBL/GenBank/DDBJ databases">
        <title>Complete sequence of chromosome 1 of Nocardioides sp. JS614.</title>
        <authorList>
            <person name="Copeland A."/>
            <person name="Lucas S."/>
            <person name="Lapidus A."/>
            <person name="Barry K."/>
            <person name="Detter J.C."/>
            <person name="Glavina del Rio T."/>
            <person name="Hammon N."/>
            <person name="Israni S."/>
            <person name="Dalin E."/>
            <person name="Tice H."/>
            <person name="Pitluck S."/>
            <person name="Thompson L.S."/>
            <person name="Brettin T."/>
            <person name="Bruce D."/>
            <person name="Han C."/>
            <person name="Tapia R."/>
            <person name="Schmutz J."/>
            <person name="Larimer F."/>
            <person name="Land M."/>
            <person name="Hauser L."/>
            <person name="Kyrpides N."/>
            <person name="Kim E."/>
            <person name="Mattes T."/>
            <person name="Gossett J."/>
            <person name="Richardson P."/>
        </authorList>
    </citation>
    <scope>NUCLEOTIDE SEQUENCE [LARGE SCALE GENOMIC DNA]</scope>
    <source>
        <strain>ATCC BAA-499 / JS614</strain>
    </source>
</reference>
<keyword id="KW-0665">Pyrimidine biosynthesis</keyword>
<keyword id="KW-1185">Reference proteome</keyword>
<keyword id="KW-0808">Transferase</keyword>
<accession>A1SJE8</accession>
<evidence type="ECO:0000255" key="1">
    <source>
        <dbReference type="HAMAP-Rule" id="MF_00001"/>
    </source>
</evidence>
<name>PYRB_NOCSJ</name>
<dbReference type="EC" id="2.1.3.2" evidence="1"/>
<dbReference type="EMBL" id="CP000509">
    <property type="protein sequence ID" value="ABL81933.1"/>
    <property type="molecule type" value="Genomic_DNA"/>
</dbReference>
<dbReference type="RefSeq" id="WP_011755874.1">
    <property type="nucleotide sequence ID" value="NC_008699.1"/>
</dbReference>
<dbReference type="SMR" id="A1SJE8"/>
<dbReference type="STRING" id="196162.Noca_2428"/>
<dbReference type="KEGG" id="nca:Noca_2428"/>
<dbReference type="eggNOG" id="COG0540">
    <property type="taxonomic scope" value="Bacteria"/>
</dbReference>
<dbReference type="HOGENOM" id="CLU_043846_2_0_11"/>
<dbReference type="OrthoDB" id="9774690at2"/>
<dbReference type="UniPathway" id="UPA00070">
    <property type="reaction ID" value="UER00116"/>
</dbReference>
<dbReference type="Proteomes" id="UP000000640">
    <property type="component" value="Chromosome"/>
</dbReference>
<dbReference type="GO" id="GO:0005829">
    <property type="term" value="C:cytosol"/>
    <property type="evidence" value="ECO:0007669"/>
    <property type="project" value="TreeGrafter"/>
</dbReference>
<dbReference type="GO" id="GO:0016597">
    <property type="term" value="F:amino acid binding"/>
    <property type="evidence" value="ECO:0007669"/>
    <property type="project" value="InterPro"/>
</dbReference>
<dbReference type="GO" id="GO:0004070">
    <property type="term" value="F:aspartate carbamoyltransferase activity"/>
    <property type="evidence" value="ECO:0007669"/>
    <property type="project" value="UniProtKB-UniRule"/>
</dbReference>
<dbReference type="GO" id="GO:0006207">
    <property type="term" value="P:'de novo' pyrimidine nucleobase biosynthetic process"/>
    <property type="evidence" value="ECO:0007669"/>
    <property type="project" value="InterPro"/>
</dbReference>
<dbReference type="GO" id="GO:0044205">
    <property type="term" value="P:'de novo' UMP biosynthetic process"/>
    <property type="evidence" value="ECO:0007669"/>
    <property type="project" value="UniProtKB-UniRule"/>
</dbReference>
<dbReference type="GO" id="GO:0006520">
    <property type="term" value="P:amino acid metabolic process"/>
    <property type="evidence" value="ECO:0007669"/>
    <property type="project" value="InterPro"/>
</dbReference>
<dbReference type="FunFam" id="3.40.50.1370:FF:000007">
    <property type="entry name" value="Aspartate carbamoyltransferase"/>
    <property type="match status" value="1"/>
</dbReference>
<dbReference type="FunFam" id="3.40.50.1370:FF:000012">
    <property type="entry name" value="Aspartate carbamoyltransferase"/>
    <property type="match status" value="1"/>
</dbReference>
<dbReference type="Gene3D" id="3.40.50.1370">
    <property type="entry name" value="Aspartate/ornithine carbamoyltransferase"/>
    <property type="match status" value="2"/>
</dbReference>
<dbReference type="HAMAP" id="MF_00001">
    <property type="entry name" value="Asp_carb_tr"/>
    <property type="match status" value="1"/>
</dbReference>
<dbReference type="InterPro" id="IPR006132">
    <property type="entry name" value="Asp/Orn_carbamoyltranf_P-bd"/>
</dbReference>
<dbReference type="InterPro" id="IPR006130">
    <property type="entry name" value="Asp/Orn_carbamoylTrfase"/>
</dbReference>
<dbReference type="InterPro" id="IPR036901">
    <property type="entry name" value="Asp/Orn_carbamoylTrfase_sf"/>
</dbReference>
<dbReference type="InterPro" id="IPR002082">
    <property type="entry name" value="Asp_carbamoyltransf"/>
</dbReference>
<dbReference type="InterPro" id="IPR006131">
    <property type="entry name" value="Asp_carbamoyltransf_Asp/Orn-bd"/>
</dbReference>
<dbReference type="NCBIfam" id="TIGR00670">
    <property type="entry name" value="asp_carb_tr"/>
    <property type="match status" value="1"/>
</dbReference>
<dbReference type="NCBIfam" id="NF002032">
    <property type="entry name" value="PRK00856.1"/>
    <property type="match status" value="1"/>
</dbReference>
<dbReference type="PANTHER" id="PTHR45753:SF6">
    <property type="entry name" value="ASPARTATE CARBAMOYLTRANSFERASE"/>
    <property type="match status" value="1"/>
</dbReference>
<dbReference type="PANTHER" id="PTHR45753">
    <property type="entry name" value="ORNITHINE CARBAMOYLTRANSFERASE, MITOCHONDRIAL"/>
    <property type="match status" value="1"/>
</dbReference>
<dbReference type="Pfam" id="PF00185">
    <property type="entry name" value="OTCace"/>
    <property type="match status" value="1"/>
</dbReference>
<dbReference type="Pfam" id="PF02729">
    <property type="entry name" value="OTCace_N"/>
    <property type="match status" value="1"/>
</dbReference>
<dbReference type="PRINTS" id="PR00100">
    <property type="entry name" value="AOTCASE"/>
</dbReference>
<dbReference type="PRINTS" id="PR00101">
    <property type="entry name" value="ATCASE"/>
</dbReference>
<dbReference type="SUPFAM" id="SSF53671">
    <property type="entry name" value="Aspartate/ornithine carbamoyltransferase"/>
    <property type="match status" value="1"/>
</dbReference>
<dbReference type="PROSITE" id="PS00097">
    <property type="entry name" value="CARBAMOYLTRANSFERASE"/>
    <property type="match status" value="1"/>
</dbReference>
<protein>
    <recommendedName>
        <fullName evidence="1">Aspartate carbamoyltransferase catalytic subunit</fullName>
        <ecNumber evidence="1">2.1.3.2</ecNumber>
    </recommendedName>
    <alternativeName>
        <fullName evidence="1">Aspartate transcarbamylase</fullName>
        <shortName evidence="1">ATCase</shortName>
    </alternativeName>
</protein>
<organism>
    <name type="scientific">Nocardioides sp. (strain ATCC BAA-499 / JS614)</name>
    <dbReference type="NCBI Taxonomy" id="196162"/>
    <lineage>
        <taxon>Bacteria</taxon>
        <taxon>Bacillati</taxon>
        <taxon>Actinomycetota</taxon>
        <taxon>Actinomycetes</taxon>
        <taxon>Propionibacteriales</taxon>
        <taxon>Nocardioidaceae</taxon>
        <taxon>Nocardioides</taxon>
    </lineage>
</organism>
<comment type="function">
    <text evidence="1">Catalyzes the condensation of carbamoyl phosphate and aspartate to form carbamoyl aspartate and inorganic phosphate, the committed step in the de novo pyrimidine nucleotide biosynthesis pathway.</text>
</comment>
<comment type="catalytic activity">
    <reaction evidence="1">
        <text>carbamoyl phosphate + L-aspartate = N-carbamoyl-L-aspartate + phosphate + H(+)</text>
        <dbReference type="Rhea" id="RHEA:20013"/>
        <dbReference type="ChEBI" id="CHEBI:15378"/>
        <dbReference type="ChEBI" id="CHEBI:29991"/>
        <dbReference type="ChEBI" id="CHEBI:32814"/>
        <dbReference type="ChEBI" id="CHEBI:43474"/>
        <dbReference type="ChEBI" id="CHEBI:58228"/>
        <dbReference type="EC" id="2.1.3.2"/>
    </reaction>
</comment>
<comment type="pathway">
    <text evidence="1">Pyrimidine metabolism; UMP biosynthesis via de novo pathway; (S)-dihydroorotate from bicarbonate: step 2/3.</text>
</comment>
<comment type="subunit">
    <text evidence="1">Heterododecamer (2C3:3R2) of six catalytic PyrB chains organized as two trimers (C3), and six regulatory PyrI chains organized as three dimers (R2).</text>
</comment>
<comment type="similarity">
    <text evidence="1">Belongs to the aspartate/ornithine carbamoyltransferase superfamily. ATCase family.</text>
</comment>
<sequence>MKRHLLSAGDLSRDDAELVLRTAAELRELADRPIKKLPALRGRTVVNLFFEDSTRTRISFEAAAKRLSADVINFAAKGSSLSKGESLKDTALTLEAMGADAVVVRHGASGAPHRLAHSGWVRSSVVNAGDGTHEHPTQALLDAFTMWRHLGQGKEQSLDGRRIAIVGDVLHSRVARSNALLLKTLGAEVTLVAPPTLLPVGIDTWPVETSYDLDAVLPKADAVMMLRVQRERMSGGFFPTAREYSRRYGLDGRRMATLQDHTIVMHPGPMVRGMEITADVADSDRSVIVEQVTNGVAVRMAVLYLLLGGSEPAVSTSSTNEAEE</sequence>
<feature type="chain" id="PRO_0000321127" description="Aspartate carbamoyltransferase catalytic subunit">
    <location>
        <begin position="1"/>
        <end position="324"/>
    </location>
</feature>
<feature type="binding site" evidence="1">
    <location>
        <position position="55"/>
    </location>
    <ligand>
        <name>carbamoyl phosphate</name>
        <dbReference type="ChEBI" id="CHEBI:58228"/>
    </ligand>
</feature>
<feature type="binding site" evidence="1">
    <location>
        <position position="56"/>
    </location>
    <ligand>
        <name>carbamoyl phosphate</name>
        <dbReference type="ChEBI" id="CHEBI:58228"/>
    </ligand>
</feature>
<feature type="binding site" evidence="1">
    <location>
        <position position="83"/>
    </location>
    <ligand>
        <name>L-aspartate</name>
        <dbReference type="ChEBI" id="CHEBI:29991"/>
    </ligand>
</feature>
<feature type="binding site" evidence="1">
    <location>
        <position position="105"/>
    </location>
    <ligand>
        <name>carbamoyl phosphate</name>
        <dbReference type="ChEBI" id="CHEBI:58228"/>
    </ligand>
</feature>
<feature type="binding site" evidence="1">
    <location>
        <position position="135"/>
    </location>
    <ligand>
        <name>carbamoyl phosphate</name>
        <dbReference type="ChEBI" id="CHEBI:58228"/>
    </ligand>
</feature>
<feature type="binding site" evidence="1">
    <location>
        <position position="138"/>
    </location>
    <ligand>
        <name>carbamoyl phosphate</name>
        <dbReference type="ChEBI" id="CHEBI:58228"/>
    </ligand>
</feature>
<feature type="binding site" evidence="1">
    <location>
        <position position="173"/>
    </location>
    <ligand>
        <name>L-aspartate</name>
        <dbReference type="ChEBI" id="CHEBI:29991"/>
    </ligand>
</feature>
<feature type="binding site" evidence="1">
    <location>
        <position position="227"/>
    </location>
    <ligand>
        <name>L-aspartate</name>
        <dbReference type="ChEBI" id="CHEBI:29991"/>
    </ligand>
</feature>
<feature type="binding site" evidence="1">
    <location>
        <position position="268"/>
    </location>
    <ligand>
        <name>carbamoyl phosphate</name>
        <dbReference type="ChEBI" id="CHEBI:58228"/>
    </ligand>
</feature>
<feature type="binding site" evidence="1">
    <location>
        <position position="269"/>
    </location>
    <ligand>
        <name>carbamoyl phosphate</name>
        <dbReference type="ChEBI" id="CHEBI:58228"/>
    </ligand>
</feature>
<gene>
    <name evidence="1" type="primary">pyrB</name>
    <name type="ordered locus">Noca_2428</name>
</gene>
<proteinExistence type="inferred from homology"/>